<dbReference type="EC" id="6.1.1.17" evidence="1"/>
<dbReference type="EMBL" id="CP000716">
    <property type="protein sequence ID" value="ABR31030.1"/>
    <property type="molecule type" value="Genomic_DNA"/>
</dbReference>
<dbReference type="RefSeq" id="WP_012057389.1">
    <property type="nucleotide sequence ID" value="NC_009616.1"/>
</dbReference>
<dbReference type="SMR" id="A6LM79"/>
<dbReference type="STRING" id="391009.Tmel_1176"/>
<dbReference type="KEGG" id="tme:Tmel_1176"/>
<dbReference type="eggNOG" id="COG0008">
    <property type="taxonomic scope" value="Bacteria"/>
</dbReference>
<dbReference type="HOGENOM" id="CLU_015768_6_3_0"/>
<dbReference type="OrthoDB" id="9807503at2"/>
<dbReference type="Proteomes" id="UP000001110">
    <property type="component" value="Chromosome"/>
</dbReference>
<dbReference type="GO" id="GO:0005829">
    <property type="term" value="C:cytosol"/>
    <property type="evidence" value="ECO:0007669"/>
    <property type="project" value="TreeGrafter"/>
</dbReference>
<dbReference type="GO" id="GO:0005524">
    <property type="term" value="F:ATP binding"/>
    <property type="evidence" value="ECO:0007669"/>
    <property type="project" value="UniProtKB-UniRule"/>
</dbReference>
<dbReference type="GO" id="GO:0004818">
    <property type="term" value="F:glutamate-tRNA ligase activity"/>
    <property type="evidence" value="ECO:0007669"/>
    <property type="project" value="UniProtKB-UniRule"/>
</dbReference>
<dbReference type="GO" id="GO:0000049">
    <property type="term" value="F:tRNA binding"/>
    <property type="evidence" value="ECO:0007669"/>
    <property type="project" value="InterPro"/>
</dbReference>
<dbReference type="GO" id="GO:0008270">
    <property type="term" value="F:zinc ion binding"/>
    <property type="evidence" value="ECO:0007669"/>
    <property type="project" value="InterPro"/>
</dbReference>
<dbReference type="GO" id="GO:0006424">
    <property type="term" value="P:glutamyl-tRNA aminoacylation"/>
    <property type="evidence" value="ECO:0007669"/>
    <property type="project" value="UniProtKB-UniRule"/>
</dbReference>
<dbReference type="CDD" id="cd00808">
    <property type="entry name" value="GluRS_core"/>
    <property type="match status" value="1"/>
</dbReference>
<dbReference type="Gene3D" id="1.10.10.350">
    <property type="match status" value="1"/>
</dbReference>
<dbReference type="Gene3D" id="1.10.8.70">
    <property type="entry name" value="Glutamate-tRNA synthetase, class I, anticodon-binding domain 1"/>
    <property type="match status" value="1"/>
</dbReference>
<dbReference type="Gene3D" id="1.10.1160.10">
    <property type="entry name" value="Glutamyl-trna Synthetase, Domain 2"/>
    <property type="match status" value="1"/>
</dbReference>
<dbReference type="Gene3D" id="3.90.800.10">
    <property type="entry name" value="Glutamyl-tRNA Synthetase, Domain 3"/>
    <property type="match status" value="1"/>
</dbReference>
<dbReference type="Gene3D" id="3.40.50.620">
    <property type="entry name" value="HUPs"/>
    <property type="match status" value="1"/>
</dbReference>
<dbReference type="HAMAP" id="MF_00022">
    <property type="entry name" value="Glu_tRNA_synth_type1"/>
    <property type="match status" value="1"/>
</dbReference>
<dbReference type="InterPro" id="IPR045462">
    <property type="entry name" value="aa-tRNA-synth_I_cd-bd"/>
</dbReference>
<dbReference type="InterPro" id="IPR020751">
    <property type="entry name" value="aa-tRNA-synth_I_codon-bd_sub2"/>
</dbReference>
<dbReference type="InterPro" id="IPR001412">
    <property type="entry name" value="aa-tRNA-synth_I_CS"/>
</dbReference>
<dbReference type="InterPro" id="IPR008925">
    <property type="entry name" value="aa_tRNA-synth_I_cd-bd_sf"/>
</dbReference>
<dbReference type="InterPro" id="IPR004527">
    <property type="entry name" value="Glu-tRNA-ligase_bac/mito"/>
</dbReference>
<dbReference type="InterPro" id="IPR020752">
    <property type="entry name" value="Glu-tRNA-synth_I_codon-bd_sub1"/>
</dbReference>
<dbReference type="InterPro" id="IPR000924">
    <property type="entry name" value="Glu/Gln-tRNA-synth"/>
</dbReference>
<dbReference type="InterPro" id="IPR020058">
    <property type="entry name" value="Glu/Gln-tRNA-synth_Ib_cat-dom"/>
</dbReference>
<dbReference type="InterPro" id="IPR020061">
    <property type="entry name" value="Glu_tRNA_lig_a-bdl"/>
</dbReference>
<dbReference type="InterPro" id="IPR049940">
    <property type="entry name" value="GluQ/Sye"/>
</dbReference>
<dbReference type="InterPro" id="IPR033910">
    <property type="entry name" value="GluRS_core"/>
</dbReference>
<dbReference type="InterPro" id="IPR014729">
    <property type="entry name" value="Rossmann-like_a/b/a_fold"/>
</dbReference>
<dbReference type="NCBIfam" id="TIGR00464">
    <property type="entry name" value="gltX_bact"/>
    <property type="match status" value="1"/>
</dbReference>
<dbReference type="PANTHER" id="PTHR43311">
    <property type="entry name" value="GLUTAMATE--TRNA LIGASE"/>
    <property type="match status" value="1"/>
</dbReference>
<dbReference type="PANTHER" id="PTHR43311:SF2">
    <property type="entry name" value="GLUTAMATE--TRNA LIGASE, MITOCHONDRIAL-RELATED"/>
    <property type="match status" value="1"/>
</dbReference>
<dbReference type="Pfam" id="PF19269">
    <property type="entry name" value="Anticodon_2"/>
    <property type="match status" value="1"/>
</dbReference>
<dbReference type="Pfam" id="PF00749">
    <property type="entry name" value="tRNA-synt_1c"/>
    <property type="match status" value="2"/>
</dbReference>
<dbReference type="PRINTS" id="PR00987">
    <property type="entry name" value="TRNASYNTHGLU"/>
</dbReference>
<dbReference type="SUPFAM" id="SSF48163">
    <property type="entry name" value="An anticodon-binding domain of class I aminoacyl-tRNA synthetases"/>
    <property type="match status" value="1"/>
</dbReference>
<dbReference type="SUPFAM" id="SSF52374">
    <property type="entry name" value="Nucleotidylyl transferase"/>
    <property type="match status" value="1"/>
</dbReference>
<dbReference type="PROSITE" id="PS00178">
    <property type="entry name" value="AA_TRNA_LIGASE_I"/>
    <property type="match status" value="1"/>
</dbReference>
<evidence type="ECO:0000255" key="1">
    <source>
        <dbReference type="HAMAP-Rule" id="MF_00022"/>
    </source>
</evidence>
<gene>
    <name evidence="1" type="primary">gltX2</name>
    <name type="ordered locus">Tmel_1176</name>
</gene>
<sequence>MIRLRFAPSPTGLLHVGGARTALFNWLYAKKHNGKFIIRIEDTDTERSTKEYETKILSALEWLGLNWDEGPDIGGGVGPYRQSERLHIYQDIAQKLINEKLAYYAVYDGENEIHRSFEYPKKFKDKSIVVKFKVVKEDKTNFHDLLKGEMSFENKFFNDFIIIKSNGFPTYNFAVVVDDHFMKISHVFRGEDHLSNTPKQIMIYNALGWKNPTFMHIPLILGNDKTPLSKRHGGTSVDFFKESGILNNALLNYLAILGWHVDEEIFNVKKKIHTFDYRNISNKSVVFDYKKLEWLNGQHMRNLDIEELIIKFKEFLKLKNYNLNIDETLEYTKDVIIICREKVNTLSQLFEISFSFFTEEYNYEENYIKKFLKKKETGDILRKAIESFEKLENYEISSIENTLRKIVEDMNLATKKVFQTIRGALLGKLVTPGLFESIEVLGKEKTLKRLKKTLDIWEKYEV</sequence>
<reference key="1">
    <citation type="submission" date="2007-05" db="EMBL/GenBank/DDBJ databases">
        <title>Complete sequence of Thermosipho melanesiensis BI429.</title>
        <authorList>
            <consortium name="US DOE Joint Genome Institute"/>
            <person name="Copeland A."/>
            <person name="Lucas S."/>
            <person name="Lapidus A."/>
            <person name="Barry K."/>
            <person name="Glavina del Rio T."/>
            <person name="Dalin E."/>
            <person name="Tice H."/>
            <person name="Pitluck S."/>
            <person name="Chertkov O."/>
            <person name="Brettin T."/>
            <person name="Bruce D."/>
            <person name="Detter J.C."/>
            <person name="Han C."/>
            <person name="Schmutz J."/>
            <person name="Larimer F."/>
            <person name="Land M."/>
            <person name="Hauser L."/>
            <person name="Kyrpides N."/>
            <person name="Mikhailova N."/>
            <person name="Nelson K."/>
            <person name="Gogarten J.P."/>
            <person name="Noll K."/>
            <person name="Richardson P."/>
        </authorList>
    </citation>
    <scope>NUCLEOTIDE SEQUENCE [LARGE SCALE GENOMIC DNA]</scope>
    <source>
        <strain>DSM 12029 / CIP 104789 / BI429</strain>
    </source>
</reference>
<organism>
    <name type="scientific">Thermosipho melanesiensis (strain DSM 12029 / CIP 104789 / BI429)</name>
    <dbReference type="NCBI Taxonomy" id="391009"/>
    <lineage>
        <taxon>Bacteria</taxon>
        <taxon>Thermotogati</taxon>
        <taxon>Thermotogota</taxon>
        <taxon>Thermotogae</taxon>
        <taxon>Thermotogales</taxon>
        <taxon>Fervidobacteriaceae</taxon>
        <taxon>Thermosipho</taxon>
    </lineage>
</organism>
<keyword id="KW-0030">Aminoacyl-tRNA synthetase</keyword>
<keyword id="KW-0067">ATP-binding</keyword>
<keyword id="KW-0963">Cytoplasm</keyword>
<keyword id="KW-0436">Ligase</keyword>
<keyword id="KW-0547">Nucleotide-binding</keyword>
<keyword id="KW-0648">Protein biosynthesis</keyword>
<name>SYE2_THEM4</name>
<comment type="function">
    <text evidence="1">Catalyzes the attachment of glutamate to tRNA(Glu) in a two-step reaction: glutamate is first activated by ATP to form Glu-AMP and then transferred to the acceptor end of tRNA(Glu).</text>
</comment>
<comment type="catalytic activity">
    <reaction evidence="1">
        <text>tRNA(Glu) + L-glutamate + ATP = L-glutamyl-tRNA(Glu) + AMP + diphosphate</text>
        <dbReference type="Rhea" id="RHEA:23540"/>
        <dbReference type="Rhea" id="RHEA-COMP:9663"/>
        <dbReference type="Rhea" id="RHEA-COMP:9680"/>
        <dbReference type="ChEBI" id="CHEBI:29985"/>
        <dbReference type="ChEBI" id="CHEBI:30616"/>
        <dbReference type="ChEBI" id="CHEBI:33019"/>
        <dbReference type="ChEBI" id="CHEBI:78442"/>
        <dbReference type="ChEBI" id="CHEBI:78520"/>
        <dbReference type="ChEBI" id="CHEBI:456215"/>
        <dbReference type="EC" id="6.1.1.17"/>
    </reaction>
</comment>
<comment type="subunit">
    <text evidence="1">Monomer.</text>
</comment>
<comment type="subcellular location">
    <subcellularLocation>
        <location evidence="1">Cytoplasm</location>
    </subcellularLocation>
</comment>
<comment type="similarity">
    <text evidence="1">Belongs to the class-I aminoacyl-tRNA synthetase family. Glutamate--tRNA ligase type 1 subfamily.</text>
</comment>
<protein>
    <recommendedName>
        <fullName evidence="1">Glutamate--tRNA ligase 2</fullName>
        <ecNumber evidence="1">6.1.1.17</ecNumber>
    </recommendedName>
    <alternativeName>
        <fullName evidence="1">Glutamyl-tRNA synthetase 2</fullName>
        <shortName evidence="1">GluRS 2</shortName>
    </alternativeName>
</protein>
<feature type="chain" id="PRO_0000367787" description="Glutamate--tRNA ligase 2">
    <location>
        <begin position="1"/>
        <end position="462"/>
    </location>
</feature>
<feature type="short sequence motif" description="'HIGH' region" evidence="1">
    <location>
        <begin position="8"/>
        <end position="18"/>
    </location>
</feature>
<feature type="short sequence motif" description="'KMSKS' region" evidence="1">
    <location>
        <begin position="227"/>
        <end position="231"/>
    </location>
</feature>
<feature type="binding site" evidence="1">
    <location>
        <position position="230"/>
    </location>
    <ligand>
        <name>ATP</name>
        <dbReference type="ChEBI" id="CHEBI:30616"/>
    </ligand>
</feature>
<accession>A6LM79</accession>
<proteinExistence type="inferred from homology"/>